<dbReference type="EC" id="4.2.1.11" evidence="1"/>
<dbReference type="EMBL" id="AE004091">
    <property type="protein sequence ID" value="AAG07023.1"/>
    <property type="molecule type" value="Genomic_DNA"/>
</dbReference>
<dbReference type="PIR" id="H83191">
    <property type="entry name" value="H83191"/>
</dbReference>
<dbReference type="RefSeq" id="NP_252325.1">
    <property type="nucleotide sequence ID" value="NC_002516.2"/>
</dbReference>
<dbReference type="RefSeq" id="WP_003092364.1">
    <property type="nucleotide sequence ID" value="NZ_QZGE01000001.1"/>
</dbReference>
<dbReference type="SMR" id="Q9HXZ5"/>
<dbReference type="FunCoup" id="Q9HXZ5">
    <property type="interactions" value="671"/>
</dbReference>
<dbReference type="STRING" id="208964.PA3635"/>
<dbReference type="PaxDb" id="208964-PA3635"/>
<dbReference type="GeneID" id="880453"/>
<dbReference type="KEGG" id="pae:PA3635"/>
<dbReference type="PATRIC" id="fig|208964.12.peg.3804"/>
<dbReference type="PseudoCAP" id="PA3635"/>
<dbReference type="HOGENOM" id="CLU_031223_2_1_6"/>
<dbReference type="InParanoid" id="Q9HXZ5"/>
<dbReference type="OrthoDB" id="9804716at2"/>
<dbReference type="PhylomeDB" id="Q9HXZ5"/>
<dbReference type="BioCyc" id="PAER208964:G1FZ6-3705-MONOMER"/>
<dbReference type="UniPathway" id="UPA00109">
    <property type="reaction ID" value="UER00187"/>
</dbReference>
<dbReference type="Proteomes" id="UP000002438">
    <property type="component" value="Chromosome"/>
</dbReference>
<dbReference type="GO" id="GO:0009986">
    <property type="term" value="C:cell surface"/>
    <property type="evidence" value="ECO:0007669"/>
    <property type="project" value="UniProtKB-SubCell"/>
</dbReference>
<dbReference type="GO" id="GO:0005576">
    <property type="term" value="C:extracellular region"/>
    <property type="evidence" value="ECO:0007669"/>
    <property type="project" value="UniProtKB-SubCell"/>
</dbReference>
<dbReference type="GO" id="GO:0000015">
    <property type="term" value="C:phosphopyruvate hydratase complex"/>
    <property type="evidence" value="ECO:0000318"/>
    <property type="project" value="GO_Central"/>
</dbReference>
<dbReference type="GO" id="GO:0000287">
    <property type="term" value="F:magnesium ion binding"/>
    <property type="evidence" value="ECO:0007669"/>
    <property type="project" value="UniProtKB-UniRule"/>
</dbReference>
<dbReference type="GO" id="GO:0004634">
    <property type="term" value="F:phosphopyruvate hydratase activity"/>
    <property type="evidence" value="ECO:0000318"/>
    <property type="project" value="GO_Central"/>
</dbReference>
<dbReference type="GO" id="GO:0006096">
    <property type="term" value="P:glycolytic process"/>
    <property type="evidence" value="ECO:0000318"/>
    <property type="project" value="GO_Central"/>
</dbReference>
<dbReference type="CDD" id="cd03313">
    <property type="entry name" value="enolase"/>
    <property type="match status" value="1"/>
</dbReference>
<dbReference type="FunFam" id="3.20.20.120:FF:000001">
    <property type="entry name" value="Enolase"/>
    <property type="match status" value="1"/>
</dbReference>
<dbReference type="FunFam" id="3.30.390.10:FF:000001">
    <property type="entry name" value="Enolase"/>
    <property type="match status" value="1"/>
</dbReference>
<dbReference type="Gene3D" id="3.20.20.120">
    <property type="entry name" value="Enolase-like C-terminal domain"/>
    <property type="match status" value="1"/>
</dbReference>
<dbReference type="Gene3D" id="3.30.390.10">
    <property type="entry name" value="Enolase-like, N-terminal domain"/>
    <property type="match status" value="1"/>
</dbReference>
<dbReference type="HAMAP" id="MF_00318">
    <property type="entry name" value="Enolase"/>
    <property type="match status" value="1"/>
</dbReference>
<dbReference type="InterPro" id="IPR000941">
    <property type="entry name" value="Enolase"/>
</dbReference>
<dbReference type="InterPro" id="IPR036849">
    <property type="entry name" value="Enolase-like_C_sf"/>
</dbReference>
<dbReference type="InterPro" id="IPR029017">
    <property type="entry name" value="Enolase-like_N"/>
</dbReference>
<dbReference type="InterPro" id="IPR020810">
    <property type="entry name" value="Enolase_C"/>
</dbReference>
<dbReference type="InterPro" id="IPR020809">
    <property type="entry name" value="Enolase_CS"/>
</dbReference>
<dbReference type="InterPro" id="IPR020811">
    <property type="entry name" value="Enolase_N"/>
</dbReference>
<dbReference type="NCBIfam" id="TIGR01060">
    <property type="entry name" value="eno"/>
    <property type="match status" value="1"/>
</dbReference>
<dbReference type="PANTHER" id="PTHR11902">
    <property type="entry name" value="ENOLASE"/>
    <property type="match status" value="1"/>
</dbReference>
<dbReference type="PANTHER" id="PTHR11902:SF1">
    <property type="entry name" value="ENOLASE"/>
    <property type="match status" value="1"/>
</dbReference>
<dbReference type="Pfam" id="PF00113">
    <property type="entry name" value="Enolase_C"/>
    <property type="match status" value="1"/>
</dbReference>
<dbReference type="Pfam" id="PF03952">
    <property type="entry name" value="Enolase_N"/>
    <property type="match status" value="1"/>
</dbReference>
<dbReference type="PIRSF" id="PIRSF001400">
    <property type="entry name" value="Enolase"/>
    <property type="match status" value="1"/>
</dbReference>
<dbReference type="PRINTS" id="PR00148">
    <property type="entry name" value="ENOLASE"/>
</dbReference>
<dbReference type="SFLD" id="SFLDS00001">
    <property type="entry name" value="Enolase"/>
    <property type="match status" value="1"/>
</dbReference>
<dbReference type="SFLD" id="SFLDF00002">
    <property type="entry name" value="enolase"/>
    <property type="match status" value="1"/>
</dbReference>
<dbReference type="SMART" id="SM01192">
    <property type="entry name" value="Enolase_C"/>
    <property type="match status" value="1"/>
</dbReference>
<dbReference type="SMART" id="SM01193">
    <property type="entry name" value="Enolase_N"/>
    <property type="match status" value="1"/>
</dbReference>
<dbReference type="SUPFAM" id="SSF51604">
    <property type="entry name" value="Enolase C-terminal domain-like"/>
    <property type="match status" value="1"/>
</dbReference>
<dbReference type="SUPFAM" id="SSF54826">
    <property type="entry name" value="Enolase N-terminal domain-like"/>
    <property type="match status" value="1"/>
</dbReference>
<dbReference type="PROSITE" id="PS00164">
    <property type="entry name" value="ENOLASE"/>
    <property type="match status" value="1"/>
</dbReference>
<protein>
    <recommendedName>
        <fullName evidence="1">Enolase</fullName>
        <ecNumber evidence="1">4.2.1.11</ecNumber>
    </recommendedName>
    <alternativeName>
        <fullName evidence="1">2-phospho-D-glycerate hydro-lyase</fullName>
    </alternativeName>
    <alternativeName>
        <fullName evidence="1">2-phosphoglycerate dehydratase</fullName>
    </alternativeName>
</protein>
<organism>
    <name type="scientific">Pseudomonas aeruginosa (strain ATCC 15692 / DSM 22644 / CIP 104116 / JCM 14847 / LMG 12228 / 1C / PRS 101 / PAO1)</name>
    <dbReference type="NCBI Taxonomy" id="208964"/>
    <lineage>
        <taxon>Bacteria</taxon>
        <taxon>Pseudomonadati</taxon>
        <taxon>Pseudomonadota</taxon>
        <taxon>Gammaproteobacteria</taxon>
        <taxon>Pseudomonadales</taxon>
        <taxon>Pseudomonadaceae</taxon>
        <taxon>Pseudomonas</taxon>
    </lineage>
</organism>
<sequence>MAKIVDIKGREVLDSRGNPTVEADVILDNGIVGSACAPSGASTGSREALELRDGDKSRYLGKGVLKAVANINGPIRDLLLGKDAADQKALDHAMIELDGTENKAKLGANAILAVSLAAAKAAAQAKGVPLYAHIADLNGTPGQYSMPVPMMNIINGGEHADNNVDIQEFMVQPVGAKNFAEALRMGAEIFHHLKAVLKARGLNTAVGDEGGFAPNLSSNEDALAAIAEAVEKAGYKLGDDVTLALDCASSEFFKDGKYDLEGEGKVFDAAGFADYLAGLTQRYPIISIEDGMDESDWAGWKGLTDKIGAKVQLVGDDLFVTNTKILKEGIEKGIGNSILIKFNQIGSLTETLEAIQMAKAAGYTAVISHRSGETEDSTIADLAVGTAAGQIKTGSLCRSDRVSKYNQLLRIEEQLGAKAPYRGRAEFRG</sequence>
<accession>Q9HXZ5</accession>
<gene>
    <name evidence="1" type="primary">eno</name>
    <name type="ordered locus">PA3635</name>
</gene>
<keyword id="KW-0963">Cytoplasm</keyword>
<keyword id="KW-0324">Glycolysis</keyword>
<keyword id="KW-0456">Lyase</keyword>
<keyword id="KW-0460">Magnesium</keyword>
<keyword id="KW-0479">Metal-binding</keyword>
<keyword id="KW-1185">Reference proteome</keyword>
<keyword id="KW-0964">Secreted</keyword>
<proteinExistence type="inferred from homology"/>
<feature type="chain" id="PRO_0000133949" description="Enolase">
    <location>
        <begin position="1"/>
        <end position="429"/>
    </location>
</feature>
<feature type="active site" description="Proton donor" evidence="1">
    <location>
        <position position="209"/>
    </location>
</feature>
<feature type="active site" description="Proton acceptor" evidence="1">
    <location>
        <position position="341"/>
    </location>
</feature>
<feature type="binding site" evidence="1">
    <location>
        <position position="167"/>
    </location>
    <ligand>
        <name>(2R)-2-phosphoglycerate</name>
        <dbReference type="ChEBI" id="CHEBI:58289"/>
    </ligand>
</feature>
<feature type="binding site" evidence="1">
    <location>
        <position position="246"/>
    </location>
    <ligand>
        <name>Mg(2+)</name>
        <dbReference type="ChEBI" id="CHEBI:18420"/>
    </ligand>
</feature>
<feature type="binding site" evidence="1">
    <location>
        <position position="289"/>
    </location>
    <ligand>
        <name>Mg(2+)</name>
        <dbReference type="ChEBI" id="CHEBI:18420"/>
    </ligand>
</feature>
<feature type="binding site" evidence="1">
    <location>
        <position position="316"/>
    </location>
    <ligand>
        <name>Mg(2+)</name>
        <dbReference type="ChEBI" id="CHEBI:18420"/>
    </ligand>
</feature>
<feature type="binding site" evidence="1">
    <location>
        <position position="341"/>
    </location>
    <ligand>
        <name>(2R)-2-phosphoglycerate</name>
        <dbReference type="ChEBI" id="CHEBI:58289"/>
    </ligand>
</feature>
<feature type="binding site" evidence="1">
    <location>
        <position position="370"/>
    </location>
    <ligand>
        <name>(2R)-2-phosphoglycerate</name>
        <dbReference type="ChEBI" id="CHEBI:58289"/>
    </ligand>
</feature>
<feature type="binding site" evidence="1">
    <location>
        <position position="371"/>
    </location>
    <ligand>
        <name>(2R)-2-phosphoglycerate</name>
        <dbReference type="ChEBI" id="CHEBI:58289"/>
    </ligand>
</feature>
<feature type="binding site" evidence="1">
    <location>
        <position position="392"/>
    </location>
    <ligand>
        <name>(2R)-2-phosphoglycerate</name>
        <dbReference type="ChEBI" id="CHEBI:58289"/>
    </ligand>
</feature>
<reference key="1">
    <citation type="journal article" date="2000" name="Nature">
        <title>Complete genome sequence of Pseudomonas aeruginosa PAO1, an opportunistic pathogen.</title>
        <authorList>
            <person name="Stover C.K."/>
            <person name="Pham X.-Q.T."/>
            <person name="Erwin A.L."/>
            <person name="Mizoguchi S.D."/>
            <person name="Warrener P."/>
            <person name="Hickey M.J."/>
            <person name="Brinkman F.S.L."/>
            <person name="Hufnagle W.O."/>
            <person name="Kowalik D.J."/>
            <person name="Lagrou M."/>
            <person name="Garber R.L."/>
            <person name="Goltry L."/>
            <person name="Tolentino E."/>
            <person name="Westbrock-Wadman S."/>
            <person name="Yuan Y."/>
            <person name="Brody L.L."/>
            <person name="Coulter S.N."/>
            <person name="Folger K.R."/>
            <person name="Kas A."/>
            <person name="Larbig K."/>
            <person name="Lim R.M."/>
            <person name="Smith K.A."/>
            <person name="Spencer D.H."/>
            <person name="Wong G.K.-S."/>
            <person name="Wu Z."/>
            <person name="Paulsen I.T."/>
            <person name="Reizer J."/>
            <person name="Saier M.H. Jr."/>
            <person name="Hancock R.E.W."/>
            <person name="Lory S."/>
            <person name="Olson M.V."/>
        </authorList>
    </citation>
    <scope>NUCLEOTIDE SEQUENCE [LARGE SCALE GENOMIC DNA]</scope>
    <source>
        <strain>ATCC 15692 / DSM 22644 / CIP 104116 / JCM 14847 / LMG 12228 / 1C / PRS 101 / PAO1</strain>
    </source>
</reference>
<name>ENO_PSEAE</name>
<evidence type="ECO:0000255" key="1">
    <source>
        <dbReference type="HAMAP-Rule" id="MF_00318"/>
    </source>
</evidence>
<comment type="function">
    <text evidence="1">Catalyzes the reversible conversion of 2-phosphoglycerate (2-PG) into phosphoenolpyruvate (PEP). It is essential for the degradation of carbohydrates via glycolysis.</text>
</comment>
<comment type="catalytic activity">
    <reaction evidence="1">
        <text>(2R)-2-phosphoglycerate = phosphoenolpyruvate + H2O</text>
        <dbReference type="Rhea" id="RHEA:10164"/>
        <dbReference type="ChEBI" id="CHEBI:15377"/>
        <dbReference type="ChEBI" id="CHEBI:58289"/>
        <dbReference type="ChEBI" id="CHEBI:58702"/>
        <dbReference type="EC" id="4.2.1.11"/>
    </reaction>
</comment>
<comment type="cofactor">
    <cofactor evidence="1">
        <name>Mg(2+)</name>
        <dbReference type="ChEBI" id="CHEBI:18420"/>
    </cofactor>
    <text evidence="1">Binds a second Mg(2+) ion via substrate during catalysis.</text>
</comment>
<comment type="pathway">
    <text evidence="1">Carbohydrate degradation; glycolysis; pyruvate from D-glyceraldehyde 3-phosphate: step 4/5.</text>
</comment>
<comment type="subunit">
    <text evidence="1">Component of the RNA degradosome, a multiprotein complex involved in RNA processing and mRNA degradation.</text>
</comment>
<comment type="subcellular location">
    <subcellularLocation>
        <location evidence="1">Cytoplasm</location>
    </subcellularLocation>
    <subcellularLocation>
        <location evidence="1">Secreted</location>
    </subcellularLocation>
    <subcellularLocation>
        <location evidence="1">Cell surface</location>
    </subcellularLocation>
    <text evidence="1">Fractions of enolase are present in both the cytoplasm and on the cell surface.</text>
</comment>
<comment type="similarity">
    <text evidence="1">Belongs to the enolase family.</text>
</comment>